<sequence>MARLVGVDLPRDKRMEVALTYIFGIGRTRSNEILAATGIDRDLRTRDLTEEQLIHLRDYIEANLKVEGDLRREVQADIRRKIEIGCYQGLRHRRGMPVRGQRTKTNARTRKGPKRTIAGKKKAR</sequence>
<keyword id="KW-0687">Ribonucleoprotein</keyword>
<keyword id="KW-0689">Ribosomal protein</keyword>
<keyword id="KW-0694">RNA-binding</keyword>
<keyword id="KW-0699">rRNA-binding</keyword>
<keyword id="KW-0820">tRNA-binding</keyword>
<organism>
    <name type="scientific">Mycobacterium bovis (strain BCG / Tokyo 172 / ATCC 35737 / TMC 1019)</name>
    <dbReference type="NCBI Taxonomy" id="561275"/>
    <lineage>
        <taxon>Bacteria</taxon>
        <taxon>Bacillati</taxon>
        <taxon>Actinomycetota</taxon>
        <taxon>Actinomycetes</taxon>
        <taxon>Mycobacteriales</taxon>
        <taxon>Mycobacteriaceae</taxon>
        <taxon>Mycobacterium</taxon>
        <taxon>Mycobacterium tuberculosis complex</taxon>
    </lineage>
</organism>
<proteinExistence type="inferred from homology"/>
<feature type="chain" id="PRO_1000165629" description="Small ribosomal subunit protein uS13">
    <location>
        <begin position="1"/>
        <end position="124"/>
    </location>
</feature>
<feature type="region of interest" description="Disordered" evidence="2">
    <location>
        <begin position="94"/>
        <end position="124"/>
    </location>
</feature>
<dbReference type="EMBL" id="AP010918">
    <property type="protein sequence ID" value="BAH27797.1"/>
    <property type="molecule type" value="Genomic_DNA"/>
</dbReference>
<dbReference type="RefSeq" id="WP_003418360.1">
    <property type="nucleotide sequence ID" value="NZ_CP014566.1"/>
</dbReference>
<dbReference type="SMR" id="C1AHR8"/>
<dbReference type="GeneID" id="45427449"/>
<dbReference type="KEGG" id="mbt:JTY_3525"/>
<dbReference type="HOGENOM" id="CLU_103849_1_2_11"/>
<dbReference type="GO" id="GO:0005829">
    <property type="term" value="C:cytosol"/>
    <property type="evidence" value="ECO:0007669"/>
    <property type="project" value="TreeGrafter"/>
</dbReference>
<dbReference type="GO" id="GO:0015935">
    <property type="term" value="C:small ribosomal subunit"/>
    <property type="evidence" value="ECO:0007669"/>
    <property type="project" value="TreeGrafter"/>
</dbReference>
<dbReference type="GO" id="GO:0019843">
    <property type="term" value="F:rRNA binding"/>
    <property type="evidence" value="ECO:0007669"/>
    <property type="project" value="UniProtKB-UniRule"/>
</dbReference>
<dbReference type="GO" id="GO:0003735">
    <property type="term" value="F:structural constituent of ribosome"/>
    <property type="evidence" value="ECO:0007669"/>
    <property type="project" value="InterPro"/>
</dbReference>
<dbReference type="GO" id="GO:0000049">
    <property type="term" value="F:tRNA binding"/>
    <property type="evidence" value="ECO:0007669"/>
    <property type="project" value="UniProtKB-UniRule"/>
</dbReference>
<dbReference type="GO" id="GO:0006412">
    <property type="term" value="P:translation"/>
    <property type="evidence" value="ECO:0007669"/>
    <property type="project" value="UniProtKB-UniRule"/>
</dbReference>
<dbReference type="FunFam" id="1.10.8.50:FF:000001">
    <property type="entry name" value="30S ribosomal protein S13"/>
    <property type="match status" value="1"/>
</dbReference>
<dbReference type="FunFam" id="4.10.910.10:FF:000001">
    <property type="entry name" value="30S ribosomal protein S13"/>
    <property type="match status" value="1"/>
</dbReference>
<dbReference type="Gene3D" id="1.10.8.50">
    <property type="match status" value="1"/>
</dbReference>
<dbReference type="Gene3D" id="4.10.910.10">
    <property type="entry name" value="30s ribosomal protein s13, domain 2"/>
    <property type="match status" value="1"/>
</dbReference>
<dbReference type="HAMAP" id="MF_01315">
    <property type="entry name" value="Ribosomal_uS13"/>
    <property type="match status" value="1"/>
</dbReference>
<dbReference type="InterPro" id="IPR027437">
    <property type="entry name" value="Rbsml_uS13_C"/>
</dbReference>
<dbReference type="InterPro" id="IPR001892">
    <property type="entry name" value="Ribosomal_uS13"/>
</dbReference>
<dbReference type="InterPro" id="IPR010979">
    <property type="entry name" value="Ribosomal_uS13-like_H2TH"/>
</dbReference>
<dbReference type="InterPro" id="IPR019980">
    <property type="entry name" value="Ribosomal_uS13_bac-type"/>
</dbReference>
<dbReference type="InterPro" id="IPR018269">
    <property type="entry name" value="Ribosomal_uS13_CS"/>
</dbReference>
<dbReference type="NCBIfam" id="TIGR03631">
    <property type="entry name" value="uS13_bact"/>
    <property type="match status" value="1"/>
</dbReference>
<dbReference type="PANTHER" id="PTHR10871">
    <property type="entry name" value="30S RIBOSOMAL PROTEIN S13/40S RIBOSOMAL PROTEIN S18"/>
    <property type="match status" value="1"/>
</dbReference>
<dbReference type="PANTHER" id="PTHR10871:SF1">
    <property type="entry name" value="SMALL RIBOSOMAL SUBUNIT PROTEIN US13M"/>
    <property type="match status" value="1"/>
</dbReference>
<dbReference type="Pfam" id="PF00416">
    <property type="entry name" value="Ribosomal_S13"/>
    <property type="match status" value="1"/>
</dbReference>
<dbReference type="PIRSF" id="PIRSF002134">
    <property type="entry name" value="Ribosomal_S13"/>
    <property type="match status" value="1"/>
</dbReference>
<dbReference type="SUPFAM" id="SSF46946">
    <property type="entry name" value="S13-like H2TH domain"/>
    <property type="match status" value="1"/>
</dbReference>
<dbReference type="PROSITE" id="PS00646">
    <property type="entry name" value="RIBOSOMAL_S13_1"/>
    <property type="match status" value="1"/>
</dbReference>
<dbReference type="PROSITE" id="PS50159">
    <property type="entry name" value="RIBOSOMAL_S13_2"/>
    <property type="match status" value="1"/>
</dbReference>
<reference key="1">
    <citation type="journal article" date="2009" name="Vaccine">
        <title>Whole genome sequence analysis of Mycobacterium bovis bacillus Calmette-Guerin (BCG) Tokyo 172: a comparative study of BCG vaccine substrains.</title>
        <authorList>
            <person name="Seki M."/>
            <person name="Honda I."/>
            <person name="Fujita I."/>
            <person name="Yano I."/>
            <person name="Yamamoto S."/>
            <person name="Koyama A."/>
        </authorList>
    </citation>
    <scope>NUCLEOTIDE SEQUENCE [LARGE SCALE GENOMIC DNA]</scope>
    <source>
        <strain>BCG / Tokyo 172 / ATCC 35737 / TMC 1019</strain>
    </source>
</reference>
<evidence type="ECO:0000255" key="1">
    <source>
        <dbReference type="HAMAP-Rule" id="MF_01315"/>
    </source>
</evidence>
<evidence type="ECO:0000256" key="2">
    <source>
        <dbReference type="SAM" id="MobiDB-lite"/>
    </source>
</evidence>
<evidence type="ECO:0000305" key="3"/>
<accession>C1AHR8</accession>
<name>RS13_MYCBT</name>
<protein>
    <recommendedName>
        <fullName evidence="1">Small ribosomal subunit protein uS13</fullName>
    </recommendedName>
    <alternativeName>
        <fullName evidence="3">30S ribosomal protein S13</fullName>
    </alternativeName>
</protein>
<comment type="function">
    <text evidence="1">Located at the top of the head of the 30S subunit, it contacts several helices of the 16S rRNA. In the 70S ribosome it contacts the 23S rRNA (bridge B1a) and protein L5 of the 50S subunit (bridge B1b), connecting the 2 subunits; these bridges are implicated in subunit movement. Contacts the tRNAs in the A and P-sites.</text>
</comment>
<comment type="subunit">
    <text evidence="1">Part of the 30S ribosomal subunit. Forms a loose heterodimer with protein S19. Forms two bridges to the 50S subunit in the 70S ribosome.</text>
</comment>
<comment type="similarity">
    <text evidence="1">Belongs to the universal ribosomal protein uS13 family.</text>
</comment>
<gene>
    <name evidence="1" type="primary">rpsM</name>
    <name type="ordered locus">JTY_3525</name>
</gene>